<comment type="function">
    <text evidence="1">Binds directly to 23S ribosomal RNA and is necessary for the in vitro assembly process of the 50S ribosomal subunit. It is not involved in the protein synthesizing functions of that subunit.</text>
</comment>
<comment type="similarity">
    <text evidence="1">Belongs to the bacterial ribosomal protein bL20 family.</text>
</comment>
<reference key="1">
    <citation type="journal article" date="2002" name="DNA Res.">
        <title>Complete genome structure of the thermophilic cyanobacterium Thermosynechococcus elongatus BP-1.</title>
        <authorList>
            <person name="Nakamura Y."/>
            <person name="Kaneko T."/>
            <person name="Sato S."/>
            <person name="Ikeuchi M."/>
            <person name="Katoh H."/>
            <person name="Sasamoto S."/>
            <person name="Watanabe A."/>
            <person name="Iriguchi M."/>
            <person name="Kawashima K."/>
            <person name="Kimura T."/>
            <person name="Kishida Y."/>
            <person name="Kiyokawa C."/>
            <person name="Kohara M."/>
            <person name="Matsumoto M."/>
            <person name="Matsuno A."/>
            <person name="Nakazaki N."/>
            <person name="Shimpo S."/>
            <person name="Sugimoto M."/>
            <person name="Takeuchi C."/>
            <person name="Yamada M."/>
            <person name="Tabata S."/>
        </authorList>
    </citation>
    <scope>NUCLEOTIDE SEQUENCE [LARGE SCALE GENOMIC DNA]</scope>
    <source>
        <strain>NIES-2133 / IAM M-273 / BP-1</strain>
    </source>
</reference>
<name>RL20_THEVB</name>
<feature type="chain" id="PRO_0000177245" description="Large ribosomal subunit protein bL20">
    <location>
        <begin position="1"/>
        <end position="116"/>
    </location>
</feature>
<accession>Q8DH02</accession>
<keyword id="KW-1185">Reference proteome</keyword>
<keyword id="KW-0687">Ribonucleoprotein</keyword>
<keyword id="KW-0689">Ribosomal protein</keyword>
<keyword id="KW-0694">RNA-binding</keyword>
<keyword id="KW-0699">rRNA-binding</keyword>
<proteinExistence type="inferred from homology"/>
<dbReference type="EMBL" id="BA000039">
    <property type="protein sequence ID" value="BAC09710.1"/>
    <property type="molecule type" value="Genomic_DNA"/>
</dbReference>
<dbReference type="RefSeq" id="NP_682948.1">
    <property type="nucleotide sequence ID" value="NC_004113.1"/>
</dbReference>
<dbReference type="RefSeq" id="WP_011057992.1">
    <property type="nucleotide sequence ID" value="NC_004113.1"/>
</dbReference>
<dbReference type="SMR" id="Q8DH02"/>
<dbReference type="STRING" id="197221.gene:10748769"/>
<dbReference type="EnsemblBacteria" id="BAC09710">
    <property type="protein sequence ID" value="BAC09710"/>
    <property type="gene ID" value="BAC09710"/>
</dbReference>
<dbReference type="KEGG" id="tel:tll2158"/>
<dbReference type="PATRIC" id="fig|197221.4.peg.2261"/>
<dbReference type="eggNOG" id="COG0292">
    <property type="taxonomic scope" value="Bacteria"/>
</dbReference>
<dbReference type="Proteomes" id="UP000000440">
    <property type="component" value="Chromosome"/>
</dbReference>
<dbReference type="GO" id="GO:1990904">
    <property type="term" value="C:ribonucleoprotein complex"/>
    <property type="evidence" value="ECO:0007669"/>
    <property type="project" value="UniProtKB-KW"/>
</dbReference>
<dbReference type="GO" id="GO:0005840">
    <property type="term" value="C:ribosome"/>
    <property type="evidence" value="ECO:0007669"/>
    <property type="project" value="UniProtKB-KW"/>
</dbReference>
<dbReference type="GO" id="GO:0019843">
    <property type="term" value="F:rRNA binding"/>
    <property type="evidence" value="ECO:0007669"/>
    <property type="project" value="UniProtKB-UniRule"/>
</dbReference>
<dbReference type="GO" id="GO:0003735">
    <property type="term" value="F:structural constituent of ribosome"/>
    <property type="evidence" value="ECO:0007669"/>
    <property type="project" value="InterPro"/>
</dbReference>
<dbReference type="GO" id="GO:0000027">
    <property type="term" value="P:ribosomal large subunit assembly"/>
    <property type="evidence" value="ECO:0007669"/>
    <property type="project" value="UniProtKB-UniRule"/>
</dbReference>
<dbReference type="GO" id="GO:0006412">
    <property type="term" value="P:translation"/>
    <property type="evidence" value="ECO:0007669"/>
    <property type="project" value="InterPro"/>
</dbReference>
<dbReference type="CDD" id="cd07026">
    <property type="entry name" value="Ribosomal_L20"/>
    <property type="match status" value="1"/>
</dbReference>
<dbReference type="FunFam" id="1.10.1900.20:FF:000001">
    <property type="entry name" value="50S ribosomal protein L20"/>
    <property type="match status" value="1"/>
</dbReference>
<dbReference type="Gene3D" id="6.10.160.10">
    <property type="match status" value="1"/>
</dbReference>
<dbReference type="Gene3D" id="1.10.1900.20">
    <property type="entry name" value="Ribosomal protein L20"/>
    <property type="match status" value="1"/>
</dbReference>
<dbReference type="HAMAP" id="MF_00382">
    <property type="entry name" value="Ribosomal_bL20"/>
    <property type="match status" value="1"/>
</dbReference>
<dbReference type="InterPro" id="IPR005813">
    <property type="entry name" value="Ribosomal_bL20"/>
</dbReference>
<dbReference type="InterPro" id="IPR049946">
    <property type="entry name" value="RIBOSOMAL_L20_CS"/>
</dbReference>
<dbReference type="InterPro" id="IPR035566">
    <property type="entry name" value="Ribosomal_protein_bL20_C"/>
</dbReference>
<dbReference type="NCBIfam" id="TIGR01032">
    <property type="entry name" value="rplT_bact"/>
    <property type="match status" value="1"/>
</dbReference>
<dbReference type="PANTHER" id="PTHR10986">
    <property type="entry name" value="39S RIBOSOMAL PROTEIN L20"/>
    <property type="match status" value="1"/>
</dbReference>
<dbReference type="Pfam" id="PF00453">
    <property type="entry name" value="Ribosomal_L20"/>
    <property type="match status" value="1"/>
</dbReference>
<dbReference type="PRINTS" id="PR00062">
    <property type="entry name" value="RIBOSOMALL20"/>
</dbReference>
<dbReference type="SUPFAM" id="SSF74731">
    <property type="entry name" value="Ribosomal protein L20"/>
    <property type="match status" value="1"/>
</dbReference>
<dbReference type="PROSITE" id="PS00937">
    <property type="entry name" value="RIBOSOMAL_L20"/>
    <property type="match status" value="1"/>
</dbReference>
<gene>
    <name evidence="1" type="primary">rplT</name>
    <name evidence="1" type="synonym">rpl20</name>
    <name type="ordered locus">tll2158</name>
</gene>
<evidence type="ECO:0000255" key="1">
    <source>
        <dbReference type="HAMAP-Rule" id="MF_00382"/>
    </source>
</evidence>
<evidence type="ECO:0000305" key="2"/>
<protein>
    <recommendedName>
        <fullName evidence="1">Large ribosomal subunit protein bL20</fullName>
    </recommendedName>
    <alternativeName>
        <fullName evidence="2">50S ribosomal protein L20</fullName>
    </alternativeName>
</protein>
<sequence length="116" mass="13387">MARVKRGNVARKRRKKILKLAKGYRAGHSKLFRTANQVVMKALCNAYRDRRRRKRDFRRLWIARINAAARQYGMSYSQLMGALKKADIQLNRKMLAQLAVLDAPAFATVIQTARAL</sequence>
<organism>
    <name type="scientific">Thermosynechococcus vestitus (strain NIES-2133 / IAM M-273 / BP-1)</name>
    <dbReference type="NCBI Taxonomy" id="197221"/>
    <lineage>
        <taxon>Bacteria</taxon>
        <taxon>Bacillati</taxon>
        <taxon>Cyanobacteriota</taxon>
        <taxon>Cyanophyceae</taxon>
        <taxon>Acaryochloridales</taxon>
        <taxon>Thermosynechococcaceae</taxon>
        <taxon>Thermosynechococcus</taxon>
    </lineage>
</organism>